<comment type="function">
    <text evidence="1">Core subunit of the mitochondrial membrane respiratory chain NADH dehydrogenase (Complex I) which catalyzes electron transfer from NADH through the respiratory chain, using ubiquinone as an electron acceptor. Part of the enzyme membrane arm which is embedded in the lipid bilayer and involved in proton translocation.</text>
</comment>
<comment type="catalytic activity">
    <reaction evidence="1">
        <text>a ubiquinone + NADH + 5 H(+)(in) = a ubiquinol + NAD(+) + 4 H(+)(out)</text>
        <dbReference type="Rhea" id="RHEA:29091"/>
        <dbReference type="Rhea" id="RHEA-COMP:9565"/>
        <dbReference type="Rhea" id="RHEA-COMP:9566"/>
        <dbReference type="ChEBI" id="CHEBI:15378"/>
        <dbReference type="ChEBI" id="CHEBI:16389"/>
        <dbReference type="ChEBI" id="CHEBI:17976"/>
        <dbReference type="ChEBI" id="CHEBI:57540"/>
        <dbReference type="ChEBI" id="CHEBI:57945"/>
        <dbReference type="EC" id="7.1.1.2"/>
    </reaction>
    <physiologicalReaction direction="left-to-right" evidence="1">
        <dbReference type="Rhea" id="RHEA:29092"/>
    </physiologicalReaction>
</comment>
<comment type="subunit">
    <text evidence="2">Core subunit of respiratory chain NADH dehydrogenase (Complex I) which is composed of 45 different subunits.</text>
</comment>
<comment type="subcellular location">
    <subcellularLocation>
        <location evidence="2">Mitochondrion inner membrane</location>
        <topology evidence="3">Multi-pass membrane protein</topology>
    </subcellularLocation>
</comment>
<comment type="similarity">
    <text evidence="4">Belongs to the complex I subunit 4L family.</text>
</comment>
<sequence>MSMVYINIFMAFTVSLMGLLVYRSHLMSSLLCLEGMMLSLFIMMTMAILNNHFTLASMAPIILLVFAACEAALGLSLLVMVSNTYGTDYVQNLNLLQC</sequence>
<dbReference type="EC" id="7.1.1.2"/>
<dbReference type="EMBL" id="AY598480">
    <property type="protein sequence ID" value="AAU00426.1"/>
    <property type="molecule type" value="Genomic_DNA"/>
</dbReference>
<dbReference type="RefSeq" id="YP_009178458.1">
    <property type="nucleotide sequence ID" value="NC_028313.1"/>
</dbReference>
<dbReference type="SMR" id="Q3L708"/>
<dbReference type="GeneID" id="26129953"/>
<dbReference type="CTD" id="4539"/>
<dbReference type="Proteomes" id="UP000472241">
    <property type="component" value="Mitochondrion"/>
</dbReference>
<dbReference type="GO" id="GO:0005743">
    <property type="term" value="C:mitochondrial inner membrane"/>
    <property type="evidence" value="ECO:0000250"/>
    <property type="project" value="UniProtKB"/>
</dbReference>
<dbReference type="GO" id="GO:0045271">
    <property type="term" value="C:respiratory chain complex I"/>
    <property type="evidence" value="ECO:0000250"/>
    <property type="project" value="UniProtKB"/>
</dbReference>
<dbReference type="GO" id="GO:0008137">
    <property type="term" value="F:NADH dehydrogenase (ubiquinone) activity"/>
    <property type="evidence" value="ECO:0000250"/>
    <property type="project" value="UniProtKB"/>
</dbReference>
<dbReference type="GO" id="GO:0042773">
    <property type="term" value="P:ATP synthesis coupled electron transport"/>
    <property type="evidence" value="ECO:0007669"/>
    <property type="project" value="InterPro"/>
</dbReference>
<dbReference type="FunFam" id="1.10.287.3510:FF:000002">
    <property type="entry name" value="NADH-ubiquinone oxidoreductase chain 4L"/>
    <property type="match status" value="1"/>
</dbReference>
<dbReference type="Gene3D" id="1.10.287.3510">
    <property type="match status" value="1"/>
</dbReference>
<dbReference type="InterPro" id="IPR001133">
    <property type="entry name" value="NADH_UbQ_OxRdtase_chain4L/K"/>
</dbReference>
<dbReference type="InterPro" id="IPR039428">
    <property type="entry name" value="NUOK/Mnh_C1-like"/>
</dbReference>
<dbReference type="PANTHER" id="PTHR11434:SF0">
    <property type="entry name" value="NADH-UBIQUINONE OXIDOREDUCTASE CHAIN 4L"/>
    <property type="match status" value="1"/>
</dbReference>
<dbReference type="PANTHER" id="PTHR11434">
    <property type="entry name" value="NADH-UBIQUINONE OXIDOREDUCTASE SUBUNIT ND4L"/>
    <property type="match status" value="1"/>
</dbReference>
<dbReference type="Pfam" id="PF00420">
    <property type="entry name" value="Oxidored_q2"/>
    <property type="match status" value="1"/>
</dbReference>
<proteinExistence type="inferred from homology"/>
<protein>
    <recommendedName>
        <fullName>NADH-ubiquinone oxidoreductase chain 4L</fullName>
        <ecNumber>7.1.1.2</ecNumber>
    </recommendedName>
    <alternativeName>
        <fullName>NADH dehydrogenase subunit 4L</fullName>
    </alternativeName>
</protein>
<keyword id="KW-0249">Electron transport</keyword>
<keyword id="KW-0472">Membrane</keyword>
<keyword id="KW-0496">Mitochondrion</keyword>
<keyword id="KW-0999">Mitochondrion inner membrane</keyword>
<keyword id="KW-0520">NAD</keyword>
<keyword id="KW-1185">Reference proteome</keyword>
<keyword id="KW-0679">Respiratory chain</keyword>
<keyword id="KW-1278">Translocase</keyword>
<keyword id="KW-0812">Transmembrane</keyword>
<keyword id="KW-1133">Transmembrane helix</keyword>
<keyword id="KW-0813">Transport</keyword>
<keyword id="KW-0830">Ubiquinone</keyword>
<geneLocation type="mitochondrion"/>
<organism>
    <name type="scientific">Lynx canadensis</name>
    <name type="common">Canada lynx</name>
    <name type="synonym">Felis canadensis</name>
    <dbReference type="NCBI Taxonomy" id="61383"/>
    <lineage>
        <taxon>Eukaryota</taxon>
        <taxon>Metazoa</taxon>
        <taxon>Chordata</taxon>
        <taxon>Craniata</taxon>
        <taxon>Vertebrata</taxon>
        <taxon>Euteleostomi</taxon>
        <taxon>Mammalia</taxon>
        <taxon>Eutheria</taxon>
        <taxon>Laurasiatheria</taxon>
        <taxon>Carnivora</taxon>
        <taxon>Feliformia</taxon>
        <taxon>Felidae</taxon>
        <taxon>Felinae</taxon>
        <taxon>Lynx</taxon>
    </lineage>
</organism>
<evidence type="ECO:0000250" key="1">
    <source>
        <dbReference type="UniProtKB" id="P03901"/>
    </source>
</evidence>
<evidence type="ECO:0000250" key="2">
    <source>
        <dbReference type="UniProtKB" id="P03902"/>
    </source>
</evidence>
<evidence type="ECO:0000255" key="3"/>
<evidence type="ECO:0000305" key="4"/>
<feature type="chain" id="PRO_0000275046" description="NADH-ubiquinone oxidoreductase chain 4L">
    <location>
        <begin position="1"/>
        <end position="98"/>
    </location>
</feature>
<feature type="transmembrane region" description="Helical" evidence="3">
    <location>
        <begin position="1"/>
        <end position="21"/>
    </location>
</feature>
<feature type="transmembrane region" description="Helical" evidence="3">
    <location>
        <begin position="29"/>
        <end position="49"/>
    </location>
</feature>
<feature type="transmembrane region" description="Helical" evidence="3">
    <location>
        <begin position="61"/>
        <end position="81"/>
    </location>
</feature>
<reference key="1">
    <citation type="journal article" date="2005" name="Mol. Phylogenet. Evol.">
        <title>A phylogeny of the Caniformia (order Carnivora) based on 12 complete protein-coding mitochondrial genes.</title>
        <authorList>
            <person name="Delisle I."/>
            <person name="Strobeck C."/>
        </authorList>
    </citation>
    <scope>NUCLEOTIDE SEQUENCE [GENOMIC DNA]</scope>
</reference>
<accession>Q3L708</accession>
<gene>
    <name type="primary">MT-ND4L</name>
    <name type="synonym">MTND4L</name>
    <name type="synonym">NADH4L</name>
    <name type="synonym">ND4L</name>
</gene>
<name>NU4LM_LYNCA</name>